<dbReference type="EC" id="4.2.2.2"/>
<dbReference type="EMBL" id="BA000055">
    <property type="protein sequence ID" value="BAE65135.1"/>
    <property type="molecule type" value="Genomic_DNA"/>
</dbReference>
<dbReference type="RefSeq" id="XP_001826268.1">
    <property type="nucleotide sequence ID" value="XM_001826216.2"/>
</dbReference>
<dbReference type="SMR" id="Q2TZY0"/>
<dbReference type="STRING" id="510516.Q2TZY0"/>
<dbReference type="CAZy" id="PL1">
    <property type="family name" value="Polysaccharide Lyase Family 1"/>
</dbReference>
<dbReference type="EnsemblFungi" id="BAE65135">
    <property type="protein sequence ID" value="BAE65135"/>
    <property type="gene ID" value="AO090011000673"/>
</dbReference>
<dbReference type="GeneID" id="5998371"/>
<dbReference type="KEGG" id="aor:AO090011000673"/>
<dbReference type="VEuPathDB" id="FungiDB:AO090011000673"/>
<dbReference type="HOGENOM" id="CLU_021894_2_1_1"/>
<dbReference type="OMA" id="LVNNYWD"/>
<dbReference type="OrthoDB" id="97414at5052"/>
<dbReference type="Proteomes" id="UP000006564">
    <property type="component" value="Chromosome 7"/>
</dbReference>
<dbReference type="GO" id="GO:0005576">
    <property type="term" value="C:extracellular region"/>
    <property type="evidence" value="ECO:0007669"/>
    <property type="project" value="UniProtKB-SubCell"/>
</dbReference>
<dbReference type="GO" id="GO:0046872">
    <property type="term" value="F:metal ion binding"/>
    <property type="evidence" value="ECO:0007669"/>
    <property type="project" value="UniProtKB-KW"/>
</dbReference>
<dbReference type="GO" id="GO:0030570">
    <property type="term" value="F:pectate lyase activity"/>
    <property type="evidence" value="ECO:0007669"/>
    <property type="project" value="UniProtKB-EC"/>
</dbReference>
<dbReference type="GO" id="GO:0071555">
    <property type="term" value="P:cell wall organization"/>
    <property type="evidence" value="ECO:0007669"/>
    <property type="project" value="UniProtKB-KW"/>
</dbReference>
<dbReference type="GO" id="GO:0000272">
    <property type="term" value="P:polysaccharide catabolic process"/>
    <property type="evidence" value="ECO:0007669"/>
    <property type="project" value="UniProtKB-KW"/>
</dbReference>
<dbReference type="FunFam" id="2.160.20.10:FF:000036">
    <property type="entry name" value="Pectate lyase A"/>
    <property type="match status" value="1"/>
</dbReference>
<dbReference type="Gene3D" id="2.160.20.10">
    <property type="entry name" value="Single-stranded right-handed beta-helix, Pectin lyase-like"/>
    <property type="match status" value="1"/>
</dbReference>
<dbReference type="InterPro" id="IPR002022">
    <property type="entry name" value="Pec_lyase"/>
</dbReference>
<dbReference type="InterPro" id="IPR012334">
    <property type="entry name" value="Pectin_lyas_fold"/>
</dbReference>
<dbReference type="InterPro" id="IPR011050">
    <property type="entry name" value="Pectin_lyase_fold/virulence"/>
</dbReference>
<dbReference type="InterPro" id="IPR045032">
    <property type="entry name" value="PEL"/>
</dbReference>
<dbReference type="PANTHER" id="PTHR31683">
    <property type="entry name" value="PECTATE LYASE 18-RELATED"/>
    <property type="match status" value="1"/>
</dbReference>
<dbReference type="PANTHER" id="PTHR31683:SF18">
    <property type="entry name" value="PECTATE LYASE 21-RELATED"/>
    <property type="match status" value="1"/>
</dbReference>
<dbReference type="Pfam" id="PF00544">
    <property type="entry name" value="Pectate_lyase_4"/>
    <property type="match status" value="1"/>
</dbReference>
<dbReference type="SMART" id="SM00656">
    <property type="entry name" value="Amb_all"/>
    <property type="match status" value="1"/>
</dbReference>
<dbReference type="SUPFAM" id="SSF51126">
    <property type="entry name" value="Pectin lyase-like"/>
    <property type="match status" value="1"/>
</dbReference>
<protein>
    <recommendedName>
        <fullName>Probable pectate lyase B</fullName>
        <ecNumber>4.2.2.2</ecNumber>
    </recommendedName>
</protein>
<accession>Q2TZY0</accession>
<organism>
    <name type="scientific">Aspergillus oryzae (strain ATCC 42149 / RIB 40)</name>
    <name type="common">Yellow koji mold</name>
    <dbReference type="NCBI Taxonomy" id="510516"/>
    <lineage>
        <taxon>Eukaryota</taxon>
        <taxon>Fungi</taxon>
        <taxon>Dikarya</taxon>
        <taxon>Ascomycota</taxon>
        <taxon>Pezizomycotina</taxon>
        <taxon>Eurotiomycetes</taxon>
        <taxon>Eurotiomycetidae</taxon>
        <taxon>Eurotiales</taxon>
        <taxon>Aspergillaceae</taxon>
        <taxon>Aspergillus</taxon>
        <taxon>Aspergillus subgen. Circumdati</taxon>
    </lineage>
</organism>
<sequence>MRVTAILTLATIAIASPTKVLNSRNELARRQATEGCSIGYCTQNGGTTGGAAGDTVTVTDLASLTEAAESETPLTIIVSGNIEGSAKIRVASDKTIYGETGSSITGVGFYIRQVSNVIMRNLKIGQVLADNGDAIGIDESTNVWVDHCDLSGDLSAGKDDLDGLLDITHAAEWVTVSNTYLHDHWKASLVGHSDSNADEDTGHLHITYANNYWYNINSRAPSIRFGTVHIINNYWDSLLGTGVNCRMDAQVLIQSSAFSNCPDEAIFFADSDYTGYAVVDDVDLGGSTNSVPEGTLTASSLPYDAIEALGSAQIAATIPETAGQKL</sequence>
<keyword id="KW-0106">Calcium</keyword>
<keyword id="KW-0119">Carbohydrate metabolism</keyword>
<keyword id="KW-0961">Cell wall biogenesis/degradation</keyword>
<keyword id="KW-0456">Lyase</keyword>
<keyword id="KW-0479">Metal-binding</keyword>
<keyword id="KW-0624">Polysaccharide degradation</keyword>
<keyword id="KW-1185">Reference proteome</keyword>
<keyword id="KW-0964">Secreted</keyword>
<keyword id="KW-0732">Signal</keyword>
<gene>
    <name type="primary">plyB</name>
    <name type="ORF">AO090011000673</name>
</gene>
<comment type="function">
    <text evidence="1">Pectinolytic enzyme consist of four classes of enzymes: pectin lyase, polygalacturonase, pectin methylesterase and rhamnogalacturonase. Among pectinolytic enzymes, pectin lyase is the most important in depolymerization of pectin, since it cleaves internal glycosidic bonds of highly methylated pectins. Favors pectate, the anion, over pectin, the methyl ester (By similarity).</text>
</comment>
<comment type="catalytic activity">
    <reaction>
        <text>Eliminative cleavage of (1-&gt;4)-alpha-D-galacturonan to give oligosaccharides with 4-deoxy-alpha-D-galact-4-enuronosyl groups at their non-reducing ends.</text>
        <dbReference type="EC" id="4.2.2.2"/>
    </reaction>
</comment>
<comment type="cofactor">
    <cofactor evidence="1">
        <name>Ca(2+)</name>
        <dbReference type="ChEBI" id="CHEBI:29108"/>
    </cofactor>
    <text evidence="1">Binds 1 Ca(2+) ion per subunit.</text>
</comment>
<comment type="subcellular location">
    <subcellularLocation>
        <location evidence="1">Secreted</location>
    </subcellularLocation>
</comment>
<comment type="similarity">
    <text evidence="3">Belongs to the polysaccharide lyase 1 family.</text>
</comment>
<evidence type="ECO:0000250" key="1"/>
<evidence type="ECO:0000255" key="2"/>
<evidence type="ECO:0000305" key="3"/>
<proteinExistence type="inferred from homology"/>
<name>PLYB_ASPOR</name>
<feature type="signal peptide" evidence="2">
    <location>
        <begin position="1"/>
        <end position="15"/>
    </location>
</feature>
<feature type="chain" id="PRO_0000394566" description="Probable pectate lyase B">
    <location>
        <begin position="16"/>
        <end position="326"/>
    </location>
</feature>
<feature type="active site" evidence="2">
    <location>
        <position position="219"/>
    </location>
</feature>
<feature type="binding site" evidence="1">
    <location>
        <position position="133"/>
    </location>
    <ligand>
        <name>Ca(2+)</name>
        <dbReference type="ChEBI" id="CHEBI:29108"/>
    </ligand>
</feature>
<feature type="binding site" evidence="1">
    <location>
        <position position="162"/>
    </location>
    <ligand>
        <name>Ca(2+)</name>
        <dbReference type="ChEBI" id="CHEBI:29108"/>
    </ligand>
</feature>
<feature type="binding site" evidence="1">
    <location>
        <position position="166"/>
    </location>
    <ligand>
        <name>Ca(2+)</name>
        <dbReference type="ChEBI" id="CHEBI:29108"/>
    </ligand>
</feature>
<reference key="1">
    <citation type="journal article" date="2005" name="Nature">
        <title>Genome sequencing and analysis of Aspergillus oryzae.</title>
        <authorList>
            <person name="Machida M."/>
            <person name="Asai K."/>
            <person name="Sano M."/>
            <person name="Tanaka T."/>
            <person name="Kumagai T."/>
            <person name="Terai G."/>
            <person name="Kusumoto K."/>
            <person name="Arima T."/>
            <person name="Akita O."/>
            <person name="Kashiwagi Y."/>
            <person name="Abe K."/>
            <person name="Gomi K."/>
            <person name="Horiuchi H."/>
            <person name="Kitamoto K."/>
            <person name="Kobayashi T."/>
            <person name="Takeuchi M."/>
            <person name="Denning D.W."/>
            <person name="Galagan J.E."/>
            <person name="Nierman W.C."/>
            <person name="Yu J."/>
            <person name="Archer D.B."/>
            <person name="Bennett J.W."/>
            <person name="Bhatnagar D."/>
            <person name="Cleveland T.E."/>
            <person name="Fedorova N.D."/>
            <person name="Gotoh O."/>
            <person name="Horikawa H."/>
            <person name="Hosoyama A."/>
            <person name="Ichinomiya M."/>
            <person name="Igarashi R."/>
            <person name="Iwashita K."/>
            <person name="Juvvadi P.R."/>
            <person name="Kato M."/>
            <person name="Kato Y."/>
            <person name="Kin T."/>
            <person name="Kokubun A."/>
            <person name="Maeda H."/>
            <person name="Maeyama N."/>
            <person name="Maruyama J."/>
            <person name="Nagasaki H."/>
            <person name="Nakajima T."/>
            <person name="Oda K."/>
            <person name="Okada K."/>
            <person name="Paulsen I."/>
            <person name="Sakamoto K."/>
            <person name="Sawano T."/>
            <person name="Takahashi M."/>
            <person name="Takase K."/>
            <person name="Terabayashi Y."/>
            <person name="Wortman J.R."/>
            <person name="Yamada O."/>
            <person name="Yamagata Y."/>
            <person name="Anazawa H."/>
            <person name="Hata Y."/>
            <person name="Koide Y."/>
            <person name="Komori T."/>
            <person name="Koyama Y."/>
            <person name="Minetoki T."/>
            <person name="Suharnan S."/>
            <person name="Tanaka A."/>
            <person name="Isono K."/>
            <person name="Kuhara S."/>
            <person name="Ogasawara N."/>
            <person name="Kikuchi H."/>
        </authorList>
    </citation>
    <scope>NUCLEOTIDE SEQUENCE [LARGE SCALE GENOMIC DNA]</scope>
    <source>
        <strain>ATCC 42149 / RIB 40</strain>
    </source>
</reference>